<organism>
    <name type="scientific">Kluyveromyces marxianus (strain DMKU3-1042 / BCC 29191 / NBRC 104275)</name>
    <name type="common">Yeast</name>
    <name type="synonym">Candida kefyr</name>
    <dbReference type="NCBI Taxonomy" id="1003335"/>
    <lineage>
        <taxon>Eukaryota</taxon>
        <taxon>Fungi</taxon>
        <taxon>Dikarya</taxon>
        <taxon>Ascomycota</taxon>
        <taxon>Saccharomycotina</taxon>
        <taxon>Saccharomycetes</taxon>
        <taxon>Saccharomycetales</taxon>
        <taxon>Saccharomycetaceae</taxon>
        <taxon>Kluyveromyces</taxon>
    </lineage>
</organism>
<reference key="1">
    <citation type="journal article" date="2015" name="Biotechnol. Biofuels">
        <title>Genetic basis of the highly efficient yeast Kluyveromyces marxianus: complete genome sequence and transcriptome analyses.</title>
        <authorList>
            <person name="Lertwattanasakul N."/>
            <person name="Kosaka T."/>
            <person name="Hosoyama A."/>
            <person name="Suzuki Y."/>
            <person name="Rodrussamee N."/>
            <person name="Matsutani M."/>
            <person name="Murata M."/>
            <person name="Fujimoto N."/>
            <person name="Suprayogi X."/>
            <person name="Tsuchikane K."/>
            <person name="Limtong S."/>
            <person name="Fujita N."/>
            <person name="Yamada M."/>
        </authorList>
    </citation>
    <scope>NUCLEOTIDE SEQUENCE [LARGE SCALE GENOMIC DNA]</scope>
    <source>
        <strain>DMKU3-1042 / BCC 29191 / NBRC 104275</strain>
    </source>
</reference>
<reference key="2">
    <citation type="journal article" date="2015" name="J. Biol. Chem.">
        <title>The thermotolerant yeast Kluyveromyces marxianus is a useful organism for structural and biochemical studies of autophagy.</title>
        <authorList>
            <person name="Yamamoto H."/>
            <person name="Shima T."/>
            <person name="Yamaguchi M."/>
            <person name="Mochizuki Y."/>
            <person name="Hoshida H."/>
            <person name="Kakuta S."/>
            <person name="Kondo-Kakuta C."/>
            <person name="Noda N.N."/>
            <person name="Inagaki F."/>
            <person name="Itoh T."/>
            <person name="Akada R."/>
            <person name="Ohsumi Y."/>
        </authorList>
    </citation>
    <scope>IDENTIFICATION</scope>
    <scope>FUNCTION</scope>
    <scope>DISRUPTION PHENOTYPE</scope>
</reference>
<accession>W0TFN1</accession>
<feature type="chain" id="PRO_0000443903" description="Autophagy-related protein 11">
    <location>
        <begin position="1"/>
        <end position="1084"/>
    </location>
</feature>
<feature type="region of interest" description="Disordered" evidence="3">
    <location>
        <begin position="925"/>
        <end position="961"/>
    </location>
</feature>
<feature type="region of interest" description="Disordered" evidence="3">
    <location>
        <begin position="973"/>
        <end position="1007"/>
    </location>
</feature>
<feature type="coiled-coil region" evidence="2">
    <location>
        <begin position="585"/>
        <end position="739"/>
    </location>
</feature>
<feature type="coiled-coil region" evidence="2">
    <location>
        <begin position="847"/>
        <end position="879"/>
    </location>
</feature>
<feature type="compositionally biased region" description="Low complexity" evidence="3">
    <location>
        <begin position="940"/>
        <end position="949"/>
    </location>
</feature>
<feature type="compositionally biased region" description="Low complexity" evidence="3">
    <location>
        <begin position="973"/>
        <end position="993"/>
    </location>
</feature>
<feature type="compositionally biased region" description="Polar residues" evidence="3">
    <location>
        <begin position="994"/>
        <end position="1007"/>
    </location>
</feature>
<dbReference type="EMBL" id="AP012219">
    <property type="protein sequence ID" value="BAO42185.1"/>
    <property type="molecule type" value="Genomic_DNA"/>
</dbReference>
<dbReference type="RefSeq" id="XP_022677943.1">
    <property type="nucleotide sequence ID" value="XM_022821598.1"/>
</dbReference>
<dbReference type="SMR" id="W0TFN1"/>
<dbReference type="GeneID" id="34718086"/>
<dbReference type="VEuPathDB" id="FungiDB:KLMA_70337"/>
<dbReference type="OrthoDB" id="447953at2759"/>
<dbReference type="Proteomes" id="UP000065495">
    <property type="component" value="Chromosome 7"/>
</dbReference>
<dbReference type="GO" id="GO:1990316">
    <property type="term" value="C:Atg1/ULK1 kinase complex"/>
    <property type="evidence" value="ECO:0007669"/>
    <property type="project" value="TreeGrafter"/>
</dbReference>
<dbReference type="GO" id="GO:0034045">
    <property type="term" value="C:phagophore assembly site membrane"/>
    <property type="evidence" value="ECO:0007669"/>
    <property type="project" value="UniProtKB-SubCell"/>
</dbReference>
<dbReference type="GO" id="GO:0005774">
    <property type="term" value="C:vacuolar membrane"/>
    <property type="evidence" value="ECO:0007669"/>
    <property type="project" value="UniProtKB-SubCell"/>
</dbReference>
<dbReference type="GO" id="GO:0060090">
    <property type="term" value="F:molecular adaptor activity"/>
    <property type="evidence" value="ECO:0007669"/>
    <property type="project" value="TreeGrafter"/>
</dbReference>
<dbReference type="GO" id="GO:0019901">
    <property type="term" value="F:protein kinase binding"/>
    <property type="evidence" value="ECO:0007669"/>
    <property type="project" value="TreeGrafter"/>
</dbReference>
<dbReference type="GO" id="GO:0000045">
    <property type="term" value="P:autophagosome assembly"/>
    <property type="evidence" value="ECO:0007669"/>
    <property type="project" value="InterPro"/>
</dbReference>
<dbReference type="GO" id="GO:0000422">
    <property type="term" value="P:autophagy of mitochondrion"/>
    <property type="evidence" value="ECO:0007669"/>
    <property type="project" value="TreeGrafter"/>
</dbReference>
<dbReference type="GO" id="GO:0034727">
    <property type="term" value="P:piecemeal microautophagy of the nucleus"/>
    <property type="evidence" value="ECO:0007669"/>
    <property type="project" value="TreeGrafter"/>
</dbReference>
<dbReference type="GO" id="GO:0015031">
    <property type="term" value="P:protein transport"/>
    <property type="evidence" value="ECO:0007669"/>
    <property type="project" value="UniProtKB-KW"/>
</dbReference>
<dbReference type="GO" id="GO:0061709">
    <property type="term" value="P:reticulophagy"/>
    <property type="evidence" value="ECO:0007669"/>
    <property type="project" value="TreeGrafter"/>
</dbReference>
<dbReference type="GO" id="GO:0034517">
    <property type="term" value="P:ribophagy"/>
    <property type="evidence" value="ECO:0007669"/>
    <property type="project" value="TreeGrafter"/>
</dbReference>
<dbReference type="Gene3D" id="1.10.287.1490">
    <property type="match status" value="1"/>
</dbReference>
<dbReference type="InterPro" id="IPR040040">
    <property type="entry name" value="ATG11"/>
</dbReference>
<dbReference type="InterPro" id="IPR019460">
    <property type="entry name" value="Atg11_C"/>
</dbReference>
<dbReference type="InterPro" id="IPR045326">
    <property type="entry name" value="ATG17-like_dom"/>
</dbReference>
<dbReference type="PANTHER" id="PTHR13222">
    <property type="entry name" value="RB1-INDUCIBLE COILED-COIL"/>
    <property type="match status" value="1"/>
</dbReference>
<dbReference type="PANTHER" id="PTHR13222:SF1">
    <property type="entry name" value="RB1-INDUCIBLE COILED-COIL PROTEIN 1"/>
    <property type="match status" value="1"/>
</dbReference>
<dbReference type="Pfam" id="PF10377">
    <property type="entry name" value="ATG11"/>
    <property type="match status" value="1"/>
</dbReference>
<dbReference type="Pfam" id="PF04108">
    <property type="entry name" value="ATG17_like"/>
    <property type="match status" value="1"/>
</dbReference>
<evidence type="ECO:0000250" key="1">
    <source>
        <dbReference type="UniProtKB" id="Q12527"/>
    </source>
</evidence>
<evidence type="ECO:0000255" key="2"/>
<evidence type="ECO:0000256" key="3">
    <source>
        <dbReference type="SAM" id="MobiDB-lite"/>
    </source>
</evidence>
<evidence type="ECO:0000269" key="4">
    <source>
    </source>
</evidence>
<evidence type="ECO:0000303" key="5">
    <source>
    </source>
</evidence>
<evidence type="ECO:0000305" key="6"/>
<proteinExistence type="inferred from homology"/>
<comment type="function">
    <text evidence="1 4">Involved in cytoplasm to vacuole transport (Cvt), pexophagy, mitophagy and nucleophagy (PubMed:26442587). Recruits mitochondria for their selective degradation via autophagy (mitophagy) during starvation, through its interaction with ATG32 (By similarity). Works as scaffold proteins that recruit ATG proteins to the pre-autophagosome (PAS), the site of vesicle/autophagosome formation (By similarity). Required for ATG9 anterograde transport from the mitochondria to the PAS (By similarity). Also recruits the ATG19-prAPE1 complex to the PAS (By similarity). Required for the Cvt vesicles completion (By similarity).</text>
</comment>
<comment type="subunit">
    <text evidence="1">Homodimer and potential homooligomers (By similarity). Interacts with ATG1 kinase and the ATG19 and ATG34 cargo protein transporters (By similarity). Interacts with ATG9, ATG17 and ATG20 (By similarity).</text>
</comment>
<comment type="subcellular location">
    <subcellularLocation>
        <location evidence="1">Preautophagosomal structure membrane</location>
        <topology evidence="1">Peripheral membrane protein</topology>
    </subcellularLocation>
    <subcellularLocation>
        <location evidence="1">Vacuole membrane</location>
        <topology evidence="1">Peripheral membrane protein</topology>
    </subcellularLocation>
    <text evidence="1">During pexophagy, accumulates in the vacuolar membrane region, where the peroxisomes contact the vacuole (By similarity).</text>
</comment>
<comment type="disruption phenotype">
    <text evidence="4">Impairs the cytoplasm to vacuole transport (Cvt) pathway (PubMed:26442587). Mislocalizes ATG8 in the cytosol, when ATG17, ATG29 or ATG31 are also deleted (PubMed:26442587).</text>
</comment>
<comment type="miscellaneous">
    <text evidence="4">Kluyveromyces marxianus proteins are shorter in length and have a more ordered secondary structure than their S.cerevisiae counterparts, which might contribute to the superior thermotolerance and solubility (PubMed:26442587). K.marxianus could be therefore useful as a new model organism for further elucidation of the molecular details of autophagy (PubMed:26442587).</text>
</comment>
<comment type="similarity">
    <text evidence="6">Belongs to the ATG11 family.</text>
</comment>
<name>ATG11_KLUMD</name>
<protein>
    <recommendedName>
        <fullName evidence="5">Autophagy-related protein 11</fullName>
    </recommendedName>
</protein>
<keyword id="KW-0072">Autophagy</keyword>
<keyword id="KW-0175">Coiled coil</keyword>
<keyword id="KW-0472">Membrane</keyword>
<keyword id="KW-0653">Protein transport</keyword>
<keyword id="KW-0813">Transport</keyword>
<keyword id="KW-0926">Vacuole</keyword>
<gene>
    <name evidence="5" type="primary">ATG11</name>
    <name type="ORF">KLMA_70337</name>
</gene>
<sequence>MPPCELISASNGASFQLSDLYFPSFLDLKQFVGETFHISVDDILLLLSYGIILKRSQWDSTKIRSEGLKSIYVFDRKLFNEDIELAVEERFRLFKPLDSPMSDLSEVDRNIVLRNMGWLKALQSDVEFFQLSIEQTRKEVQNMLDCGVVMLEYLKNYCHEVETLYNSHVGFLNKLHEHSASSQWREVYDSVLEAVKIDQQRSLASFFQIDELNQIEAKIRHTDHELNMKLKELKKTIDTCYQHRKTLVSELENIKSISVVSPDCMDKQMTDKFNEMAQELEAASNEWVQNSENNDHISEKVKQMKDSHIPNLQTISQSLFNKASKIIETKTDMQRQLRSLYISVAKSQMDIIEVKSTLTKDMKSDMKLLQTYELQLSQVLDLPMCYGLYLIELYRQQLWMDNYTHIKDQHESALQVMLQEEIHQRKMWYRDFQWISKFLKVDQSLPSTVSITPLKALRRVDLLQINEYFNQLSSAKVSETTLNVLKSKLSQAEMDNMLPELSEQSSNDTGAAIEGYKSRIKKLENLLLDAQFQRYDSWPSGILNKEIAMVQMFRNNTLNNKVQRSSTDDISNSIQQSYSKTLGDVQNLQKAISEYSGLTDTLKEELSTLKSQISNMEVEKNAYKESMANLNKELSNLLINRENFHTEMMERSNDFKKHLALVGEENEQLTKQNQQLSNEIIESQKKYEELNKIKDDLLLNMANQETQAEQERAALQEEIESLKKEVGQLQMAKSSLTESEELLGINKQLEKTLYDVFQGSIFLLESIGLLLSKDIDGKFQIVRVKGLRKDLDSSVIDMNGSLVKSVVSHEIKDTFESIKDSLDYKPHENFISYTEKLFGNQLFEMAVIRRFNDIESLAKKLRKENKNKKILLQKYTNDKITINNFQLGDLALFLPINDQELLLNSSVSSLNSSFSSIDLNSSTQSMIPPRVIPNRVEPASNTNNSNPSSVPEDMGSPNMNRVNTMGNVKVNANIGSNNSNNNYVNTGNANGNNKPETNIDTTSSTNAESPKKQIVWAIFTATNTEVKYILRNTMSNYELLREKEWAVGRITALEKNIVMEGARNPFKFPQNTVWFEVDALFNLS</sequence>